<reference key="1">
    <citation type="journal article" date="2001" name="DNA Res.">
        <title>Complete genomic sequence of the filamentous nitrogen-fixing cyanobacterium Anabaena sp. strain PCC 7120.</title>
        <authorList>
            <person name="Kaneko T."/>
            <person name="Nakamura Y."/>
            <person name="Wolk C.P."/>
            <person name="Kuritz T."/>
            <person name="Sasamoto S."/>
            <person name="Watanabe A."/>
            <person name="Iriguchi M."/>
            <person name="Ishikawa A."/>
            <person name="Kawashima K."/>
            <person name="Kimura T."/>
            <person name="Kishida Y."/>
            <person name="Kohara M."/>
            <person name="Matsumoto M."/>
            <person name="Matsuno A."/>
            <person name="Muraki A."/>
            <person name="Nakazaki N."/>
            <person name="Shimpo S."/>
            <person name="Sugimoto M."/>
            <person name="Takazawa M."/>
            <person name="Yamada M."/>
            <person name="Yasuda M."/>
            <person name="Tabata S."/>
        </authorList>
    </citation>
    <scope>NUCLEOTIDE SEQUENCE [LARGE SCALE GENOMIC DNA]</scope>
    <source>
        <strain>PCC 7120 / SAG 25.82 / UTEX 2576</strain>
    </source>
</reference>
<keyword id="KW-0002">3D-structure</keyword>
<keyword id="KW-0030">Aminoacyl-tRNA synthetase</keyword>
<keyword id="KW-0067">ATP-binding</keyword>
<keyword id="KW-0963">Cytoplasm</keyword>
<keyword id="KW-0436">Ligase</keyword>
<keyword id="KW-0547">Nucleotide-binding</keyword>
<keyword id="KW-0648">Protein biosynthesis</keyword>
<keyword id="KW-1185">Reference proteome</keyword>
<feature type="chain" id="PRO_0000136089" description="Histidine--tRNA ligase">
    <location>
        <begin position="1"/>
        <end position="462"/>
    </location>
</feature>
<feature type="helix" evidence="3">
    <location>
        <begin position="20"/>
        <end position="39"/>
    </location>
</feature>
<feature type="strand" evidence="3">
    <location>
        <begin position="49"/>
        <end position="52"/>
    </location>
</feature>
<feature type="helix" evidence="3">
    <location>
        <begin position="53"/>
        <end position="57"/>
    </location>
</feature>
<feature type="helix" evidence="3">
    <location>
        <begin position="58"/>
        <end position="60"/>
    </location>
</feature>
<feature type="strand" evidence="3">
    <location>
        <begin position="66"/>
        <end position="73"/>
    </location>
</feature>
<feature type="strand" evidence="3">
    <location>
        <begin position="93"/>
        <end position="95"/>
    </location>
</feature>
<feature type="helix" evidence="3">
    <location>
        <begin position="100"/>
        <end position="110"/>
    </location>
</feature>
<feature type="helix" evidence="3">
    <location>
        <begin position="111"/>
        <end position="113"/>
    </location>
</feature>
<feature type="strand" evidence="3">
    <location>
        <begin position="116"/>
        <end position="122"/>
    </location>
</feature>
<feature type="strand" evidence="3">
    <location>
        <begin position="125"/>
        <end position="127"/>
    </location>
</feature>
<feature type="strand" evidence="3">
    <location>
        <begin position="139"/>
        <end position="148"/>
    </location>
</feature>
<feature type="helix" evidence="3">
    <location>
        <begin position="155"/>
        <end position="172"/>
    </location>
</feature>
<feature type="strand" evidence="3">
    <location>
        <begin position="177"/>
        <end position="183"/>
    </location>
</feature>
<feature type="helix" evidence="3">
    <location>
        <begin position="184"/>
        <end position="193"/>
    </location>
</feature>
<feature type="helix" evidence="3">
    <location>
        <begin position="198"/>
        <end position="208"/>
    </location>
</feature>
<feature type="helix" evidence="3">
    <location>
        <begin position="211"/>
        <end position="225"/>
    </location>
</feature>
<feature type="helix" evidence="3">
    <location>
        <begin position="230"/>
        <end position="240"/>
    </location>
</feature>
<feature type="helix" evidence="3">
    <location>
        <begin position="246"/>
        <end position="259"/>
    </location>
</feature>
<feature type="helix" evidence="3">
    <location>
        <begin position="264"/>
        <end position="282"/>
    </location>
</feature>
<feature type="helix" evidence="3">
    <location>
        <begin position="287"/>
        <end position="289"/>
    </location>
</feature>
<feature type="strand" evidence="3">
    <location>
        <begin position="290"/>
        <end position="292"/>
    </location>
</feature>
<feature type="strand" evidence="3">
    <location>
        <begin position="300"/>
        <end position="312"/>
    </location>
</feature>
<feature type="helix" evidence="3">
    <location>
        <begin position="316"/>
        <end position="318"/>
    </location>
</feature>
<feature type="strand" evidence="3">
    <location>
        <begin position="321"/>
        <end position="331"/>
    </location>
</feature>
<feature type="helix" evidence="3">
    <location>
        <begin position="332"/>
        <end position="334"/>
    </location>
</feature>
<feature type="strand" evidence="3">
    <location>
        <begin position="341"/>
        <end position="347"/>
    </location>
</feature>
<feature type="helix" evidence="3">
    <location>
        <begin position="348"/>
        <end position="357"/>
    </location>
</feature>
<feature type="strand" evidence="3">
    <location>
        <begin position="371"/>
        <end position="373"/>
    </location>
</feature>
<feature type="helix" evidence="3">
    <location>
        <begin position="378"/>
        <end position="380"/>
    </location>
</feature>
<feature type="helix" evidence="3">
    <location>
        <begin position="381"/>
        <end position="393"/>
    </location>
</feature>
<feature type="strand" evidence="3">
    <location>
        <begin position="398"/>
        <end position="400"/>
    </location>
</feature>
<feature type="helix" evidence="3">
    <location>
        <begin position="407"/>
        <end position="417"/>
    </location>
</feature>
<feature type="strand" evidence="3">
    <location>
        <begin position="421"/>
        <end position="424"/>
    </location>
</feature>
<feature type="helix" evidence="3">
    <location>
        <begin position="427"/>
        <end position="431"/>
    </location>
</feature>
<feature type="strand" evidence="3">
    <location>
        <begin position="436"/>
        <end position="439"/>
    </location>
</feature>
<feature type="turn" evidence="3">
    <location>
        <begin position="440"/>
        <end position="443"/>
    </location>
</feature>
<feature type="strand" evidence="3">
    <location>
        <begin position="444"/>
        <end position="447"/>
    </location>
</feature>
<feature type="helix" evidence="3">
    <location>
        <begin position="453"/>
        <end position="459"/>
    </location>
</feature>
<organism>
    <name type="scientific">Nostoc sp. (strain PCC 7120 / SAG 25.82 / UTEX 2576)</name>
    <dbReference type="NCBI Taxonomy" id="103690"/>
    <lineage>
        <taxon>Bacteria</taxon>
        <taxon>Bacillati</taxon>
        <taxon>Cyanobacteriota</taxon>
        <taxon>Cyanophyceae</taxon>
        <taxon>Nostocales</taxon>
        <taxon>Nostocaceae</taxon>
        <taxon>Nostoc</taxon>
    </lineage>
</organism>
<dbReference type="EC" id="6.1.1.21"/>
<dbReference type="EMBL" id="BA000019">
    <property type="protein sequence ID" value="BAB76711.1"/>
    <property type="molecule type" value="Genomic_DNA"/>
</dbReference>
<dbReference type="PIR" id="AD2432">
    <property type="entry name" value="AD2432"/>
</dbReference>
<dbReference type="RefSeq" id="WP_010999138.1">
    <property type="nucleotide sequence ID" value="NZ_RSCN01000014.1"/>
</dbReference>
<dbReference type="PDB" id="3NET">
    <property type="method" value="X-ray"/>
    <property type="resolution" value="2.70 A"/>
    <property type="chains" value="A/B=1-462"/>
</dbReference>
<dbReference type="PDBsum" id="3NET"/>
<dbReference type="SMR" id="Q8YMC2"/>
<dbReference type="STRING" id="103690.gene:10497070"/>
<dbReference type="KEGG" id="ana:all5012"/>
<dbReference type="eggNOG" id="COG0124">
    <property type="taxonomic scope" value="Bacteria"/>
</dbReference>
<dbReference type="OrthoDB" id="9800814at2"/>
<dbReference type="EvolutionaryTrace" id="Q8YMC2"/>
<dbReference type="Proteomes" id="UP000002483">
    <property type="component" value="Chromosome"/>
</dbReference>
<dbReference type="GO" id="GO:0005737">
    <property type="term" value="C:cytoplasm"/>
    <property type="evidence" value="ECO:0007669"/>
    <property type="project" value="UniProtKB-SubCell"/>
</dbReference>
<dbReference type="GO" id="GO:0005524">
    <property type="term" value="F:ATP binding"/>
    <property type="evidence" value="ECO:0007669"/>
    <property type="project" value="UniProtKB-UniRule"/>
</dbReference>
<dbReference type="GO" id="GO:0004821">
    <property type="term" value="F:histidine-tRNA ligase activity"/>
    <property type="evidence" value="ECO:0007669"/>
    <property type="project" value="UniProtKB-UniRule"/>
</dbReference>
<dbReference type="GO" id="GO:0006427">
    <property type="term" value="P:histidyl-tRNA aminoacylation"/>
    <property type="evidence" value="ECO:0007669"/>
    <property type="project" value="UniProtKB-UniRule"/>
</dbReference>
<dbReference type="CDD" id="cd00773">
    <property type="entry name" value="HisRS-like_core"/>
    <property type="match status" value="1"/>
</dbReference>
<dbReference type="CDD" id="cd00859">
    <property type="entry name" value="HisRS_anticodon"/>
    <property type="match status" value="1"/>
</dbReference>
<dbReference type="Gene3D" id="3.40.50.800">
    <property type="entry name" value="Anticodon-binding domain"/>
    <property type="match status" value="1"/>
</dbReference>
<dbReference type="Gene3D" id="3.30.930.10">
    <property type="entry name" value="Bira Bifunctional Protein, Domain 2"/>
    <property type="match status" value="1"/>
</dbReference>
<dbReference type="HAMAP" id="MF_00127">
    <property type="entry name" value="His_tRNA_synth"/>
    <property type="match status" value="1"/>
</dbReference>
<dbReference type="InterPro" id="IPR006195">
    <property type="entry name" value="aa-tRNA-synth_II"/>
</dbReference>
<dbReference type="InterPro" id="IPR045864">
    <property type="entry name" value="aa-tRNA-synth_II/BPL/LPL"/>
</dbReference>
<dbReference type="InterPro" id="IPR004154">
    <property type="entry name" value="Anticodon-bd"/>
</dbReference>
<dbReference type="InterPro" id="IPR036621">
    <property type="entry name" value="Anticodon-bd_dom_sf"/>
</dbReference>
<dbReference type="InterPro" id="IPR015807">
    <property type="entry name" value="His-tRNA-ligase"/>
</dbReference>
<dbReference type="InterPro" id="IPR041715">
    <property type="entry name" value="HisRS-like_core"/>
</dbReference>
<dbReference type="InterPro" id="IPR004516">
    <property type="entry name" value="HisRS/HisZ"/>
</dbReference>
<dbReference type="InterPro" id="IPR033656">
    <property type="entry name" value="HisRS_anticodon"/>
</dbReference>
<dbReference type="NCBIfam" id="TIGR00442">
    <property type="entry name" value="hisS"/>
    <property type="match status" value="1"/>
</dbReference>
<dbReference type="PANTHER" id="PTHR11476:SF7">
    <property type="entry name" value="HISTIDINE--TRNA LIGASE"/>
    <property type="match status" value="1"/>
</dbReference>
<dbReference type="PANTHER" id="PTHR11476">
    <property type="entry name" value="HISTIDYL-TRNA SYNTHETASE"/>
    <property type="match status" value="1"/>
</dbReference>
<dbReference type="Pfam" id="PF03129">
    <property type="entry name" value="HGTP_anticodon"/>
    <property type="match status" value="1"/>
</dbReference>
<dbReference type="Pfam" id="PF13393">
    <property type="entry name" value="tRNA-synt_His"/>
    <property type="match status" value="1"/>
</dbReference>
<dbReference type="PIRSF" id="PIRSF001549">
    <property type="entry name" value="His-tRNA_synth"/>
    <property type="match status" value="1"/>
</dbReference>
<dbReference type="SUPFAM" id="SSF52954">
    <property type="entry name" value="Class II aaRS ABD-related"/>
    <property type="match status" value="1"/>
</dbReference>
<dbReference type="SUPFAM" id="SSF55681">
    <property type="entry name" value="Class II aaRS and biotin synthetases"/>
    <property type="match status" value="1"/>
</dbReference>
<dbReference type="PROSITE" id="PS50862">
    <property type="entry name" value="AA_TRNA_LIGASE_II"/>
    <property type="match status" value="1"/>
</dbReference>
<sequence>MAKNDKINFSTPSGFPEFLPSEKRLELYLLDTIRRVYESYGFTPIETPAVERLEVLQAKGNQGDNIIYGLEPILPPNRQAEKDKSGDTGSEARALKFDQTVPLAAYIARHLNDLTFPFARYQMDVVFRGERAKDGRFRQFRQCDIDVVGREKLSLLYDAQMPAIITEIFEAVNIGDFVIRINNRKVLTGFFQSLNISETQIKSCISIIDNLEKIGEAKVKLELEKEGINPEQTQKIIDFVKIDGSVDDVLDKLKHLSQTLPESEQFNLGVSELETVITGVRNLGVPDKRFCIDLAIARGLNYYTGTVYETTLIGHEALGSICSGGRYEELVGTFIGEKMPGVGISIGLTRLISRLLKAGILNTLPPTPAQVVVVNMQDELMPTYLKVSQQLRQAGLNVITNFEKRQLGKQFQAADKQGIRFCVIIGADEAAAQKSSLKDLQSGEQVEVALADLAEEIKRRLT</sequence>
<protein>
    <recommendedName>
        <fullName>Histidine--tRNA ligase</fullName>
        <ecNumber>6.1.1.21</ecNumber>
    </recommendedName>
    <alternativeName>
        <fullName>Histidyl-tRNA synthetase</fullName>
        <shortName>HisRS</shortName>
    </alternativeName>
</protein>
<comment type="catalytic activity">
    <reaction>
        <text>tRNA(His) + L-histidine + ATP = L-histidyl-tRNA(His) + AMP + diphosphate + H(+)</text>
        <dbReference type="Rhea" id="RHEA:17313"/>
        <dbReference type="Rhea" id="RHEA-COMP:9665"/>
        <dbReference type="Rhea" id="RHEA-COMP:9689"/>
        <dbReference type="ChEBI" id="CHEBI:15378"/>
        <dbReference type="ChEBI" id="CHEBI:30616"/>
        <dbReference type="ChEBI" id="CHEBI:33019"/>
        <dbReference type="ChEBI" id="CHEBI:57595"/>
        <dbReference type="ChEBI" id="CHEBI:78442"/>
        <dbReference type="ChEBI" id="CHEBI:78527"/>
        <dbReference type="ChEBI" id="CHEBI:456215"/>
        <dbReference type="EC" id="6.1.1.21"/>
    </reaction>
</comment>
<comment type="subunit">
    <text evidence="1">Homodimer.</text>
</comment>
<comment type="subcellular location">
    <subcellularLocation>
        <location evidence="1">Cytoplasm</location>
    </subcellularLocation>
</comment>
<comment type="similarity">
    <text evidence="2">Belongs to the class-II aminoacyl-tRNA synthetase family.</text>
</comment>
<gene>
    <name type="primary">hisS</name>
    <name type="ordered locus">all5012</name>
</gene>
<evidence type="ECO:0000250" key="1"/>
<evidence type="ECO:0000305" key="2"/>
<evidence type="ECO:0007829" key="3">
    <source>
        <dbReference type="PDB" id="3NET"/>
    </source>
</evidence>
<proteinExistence type="evidence at protein level"/>
<name>SYH_NOSS1</name>
<accession>Q8YMC2</accession>